<organism>
    <name type="scientific">Chloroflexus aggregans (strain MD-66 / DSM 9485)</name>
    <dbReference type="NCBI Taxonomy" id="326427"/>
    <lineage>
        <taxon>Bacteria</taxon>
        <taxon>Bacillati</taxon>
        <taxon>Chloroflexota</taxon>
        <taxon>Chloroflexia</taxon>
        <taxon>Chloroflexales</taxon>
        <taxon>Chloroflexineae</taxon>
        <taxon>Chloroflexaceae</taxon>
        <taxon>Chloroflexus</taxon>
    </lineage>
</organism>
<proteinExistence type="inferred from homology"/>
<accession>B8G3A9</accession>
<comment type="function">
    <text evidence="1">This protein is located at the 30S-50S ribosomal subunit interface and may play a role in the structure and function of the aminoacyl-tRNA binding site.</text>
</comment>
<comment type="similarity">
    <text evidence="1">Belongs to the bacterial ribosomal protein bL19 family.</text>
</comment>
<sequence>MSQQLLEELGRRQYRTDIPEFRVGDTVRVGVKVVEGNRERVQDFEGVVIRRRGEGINENFTVRRIASHGIGVERTFLLHAPRIDYIKVIRQGKVRRAKLYYLRGRTGKAARIRERR</sequence>
<evidence type="ECO:0000255" key="1">
    <source>
        <dbReference type="HAMAP-Rule" id="MF_00402"/>
    </source>
</evidence>
<evidence type="ECO:0000305" key="2"/>
<protein>
    <recommendedName>
        <fullName evidence="1">Large ribosomal subunit protein bL19</fullName>
    </recommendedName>
    <alternativeName>
        <fullName evidence="2">50S ribosomal protein L19</fullName>
    </alternativeName>
</protein>
<reference key="1">
    <citation type="submission" date="2008-12" db="EMBL/GenBank/DDBJ databases">
        <title>Complete sequence of Chloroflexus aggregans DSM 9485.</title>
        <authorList>
            <consortium name="US DOE Joint Genome Institute"/>
            <person name="Lucas S."/>
            <person name="Copeland A."/>
            <person name="Lapidus A."/>
            <person name="Glavina del Rio T."/>
            <person name="Dalin E."/>
            <person name="Tice H."/>
            <person name="Pitluck S."/>
            <person name="Foster B."/>
            <person name="Larimer F."/>
            <person name="Land M."/>
            <person name="Hauser L."/>
            <person name="Kyrpides N."/>
            <person name="Mikhailova N."/>
            <person name="Bryant D.A."/>
            <person name="Richardson P."/>
        </authorList>
    </citation>
    <scope>NUCLEOTIDE SEQUENCE [LARGE SCALE GENOMIC DNA]</scope>
    <source>
        <strain>MD-66 / DSM 9485</strain>
    </source>
</reference>
<gene>
    <name evidence="1" type="primary">rplS</name>
    <name type="ordered locus">Cagg_2409</name>
</gene>
<keyword id="KW-0687">Ribonucleoprotein</keyword>
<keyword id="KW-0689">Ribosomal protein</keyword>
<name>RL19_CHLAD</name>
<dbReference type="EMBL" id="CP001337">
    <property type="protein sequence ID" value="ACL25282.1"/>
    <property type="molecule type" value="Genomic_DNA"/>
</dbReference>
<dbReference type="RefSeq" id="WP_015941140.1">
    <property type="nucleotide sequence ID" value="NC_011831.1"/>
</dbReference>
<dbReference type="SMR" id="B8G3A9"/>
<dbReference type="STRING" id="326427.Cagg_2409"/>
<dbReference type="KEGG" id="cag:Cagg_2409"/>
<dbReference type="eggNOG" id="COG0335">
    <property type="taxonomic scope" value="Bacteria"/>
</dbReference>
<dbReference type="HOGENOM" id="CLU_103507_2_1_0"/>
<dbReference type="OrthoDB" id="9803541at2"/>
<dbReference type="Proteomes" id="UP000002508">
    <property type="component" value="Chromosome"/>
</dbReference>
<dbReference type="GO" id="GO:0022625">
    <property type="term" value="C:cytosolic large ribosomal subunit"/>
    <property type="evidence" value="ECO:0007669"/>
    <property type="project" value="TreeGrafter"/>
</dbReference>
<dbReference type="GO" id="GO:0003735">
    <property type="term" value="F:structural constituent of ribosome"/>
    <property type="evidence" value="ECO:0007669"/>
    <property type="project" value="InterPro"/>
</dbReference>
<dbReference type="GO" id="GO:0006412">
    <property type="term" value="P:translation"/>
    <property type="evidence" value="ECO:0007669"/>
    <property type="project" value="UniProtKB-UniRule"/>
</dbReference>
<dbReference type="FunFam" id="2.30.30.790:FF:000001">
    <property type="entry name" value="50S ribosomal protein L19"/>
    <property type="match status" value="1"/>
</dbReference>
<dbReference type="Gene3D" id="2.30.30.790">
    <property type="match status" value="1"/>
</dbReference>
<dbReference type="HAMAP" id="MF_00402">
    <property type="entry name" value="Ribosomal_bL19"/>
    <property type="match status" value="1"/>
</dbReference>
<dbReference type="InterPro" id="IPR001857">
    <property type="entry name" value="Ribosomal_bL19"/>
</dbReference>
<dbReference type="InterPro" id="IPR018257">
    <property type="entry name" value="Ribosomal_bL19_CS"/>
</dbReference>
<dbReference type="InterPro" id="IPR038657">
    <property type="entry name" value="Ribosomal_bL19_sf"/>
</dbReference>
<dbReference type="InterPro" id="IPR008991">
    <property type="entry name" value="Translation_prot_SH3-like_sf"/>
</dbReference>
<dbReference type="NCBIfam" id="TIGR01024">
    <property type="entry name" value="rplS_bact"/>
    <property type="match status" value="1"/>
</dbReference>
<dbReference type="PANTHER" id="PTHR15680:SF9">
    <property type="entry name" value="LARGE RIBOSOMAL SUBUNIT PROTEIN BL19M"/>
    <property type="match status" value="1"/>
</dbReference>
<dbReference type="PANTHER" id="PTHR15680">
    <property type="entry name" value="RIBOSOMAL PROTEIN L19"/>
    <property type="match status" value="1"/>
</dbReference>
<dbReference type="Pfam" id="PF01245">
    <property type="entry name" value="Ribosomal_L19"/>
    <property type="match status" value="1"/>
</dbReference>
<dbReference type="PIRSF" id="PIRSF002191">
    <property type="entry name" value="Ribosomal_L19"/>
    <property type="match status" value="1"/>
</dbReference>
<dbReference type="PRINTS" id="PR00061">
    <property type="entry name" value="RIBOSOMALL19"/>
</dbReference>
<dbReference type="SUPFAM" id="SSF50104">
    <property type="entry name" value="Translation proteins SH3-like domain"/>
    <property type="match status" value="1"/>
</dbReference>
<dbReference type="PROSITE" id="PS01015">
    <property type="entry name" value="RIBOSOMAL_L19"/>
    <property type="match status" value="1"/>
</dbReference>
<feature type="chain" id="PRO_1000134562" description="Large ribosomal subunit protein bL19">
    <location>
        <begin position="1"/>
        <end position="116"/>
    </location>
</feature>